<evidence type="ECO:0000250" key="1"/>
<evidence type="ECO:0000255" key="2">
    <source>
        <dbReference type="PROSITE-ProRule" id="PRU00455"/>
    </source>
</evidence>
<evidence type="ECO:0000256" key="3">
    <source>
        <dbReference type="SAM" id="MobiDB-lite"/>
    </source>
</evidence>
<evidence type="ECO:0000305" key="4"/>
<organism>
    <name type="scientific">Arabidopsis thaliana</name>
    <name type="common">Mouse-ear cress</name>
    <dbReference type="NCBI Taxonomy" id="3702"/>
    <lineage>
        <taxon>Eukaryota</taxon>
        <taxon>Viridiplantae</taxon>
        <taxon>Streptophyta</taxon>
        <taxon>Embryophyta</taxon>
        <taxon>Tracheophyta</taxon>
        <taxon>Spermatophyta</taxon>
        <taxon>Magnoliopsida</taxon>
        <taxon>eudicotyledons</taxon>
        <taxon>Gunneridae</taxon>
        <taxon>Pentapetalae</taxon>
        <taxon>rosids</taxon>
        <taxon>malvids</taxon>
        <taxon>Brassicales</taxon>
        <taxon>Brassicaceae</taxon>
        <taxon>Camelineae</taxon>
        <taxon>Arabidopsis</taxon>
    </lineage>
</organism>
<gene>
    <name type="ordered locus">At5g37930</name>
    <name type="ORF">K18L3.13</name>
</gene>
<protein>
    <recommendedName>
        <fullName>E3 ubiquitin-protein ligase SINA-like 10</fullName>
        <ecNumber>2.3.2.27</ecNumber>
    </recommendedName>
    <alternativeName>
        <fullName evidence="4">RING-type E3 ubiquitin transferase SINA-like 10</fullName>
    </alternativeName>
    <alternativeName>
        <fullName>Seven in absentia-like protein 10</fullName>
    </alternativeName>
</protein>
<dbReference type="EC" id="2.3.2.27"/>
<dbReference type="EMBL" id="AB012241">
    <property type="protein sequence ID" value="BAB09039.1"/>
    <property type="status" value="ALT_INIT"/>
    <property type="molecule type" value="Genomic_DNA"/>
</dbReference>
<dbReference type="EMBL" id="CP002688">
    <property type="protein sequence ID" value="AED94248.1"/>
    <property type="molecule type" value="Genomic_DNA"/>
</dbReference>
<dbReference type="EMBL" id="BT004120">
    <property type="protein sequence ID" value="AAO42143.1"/>
    <property type="molecule type" value="mRNA"/>
</dbReference>
<dbReference type="EMBL" id="BT004967">
    <property type="protein sequence ID" value="AAO50500.1"/>
    <property type="molecule type" value="mRNA"/>
</dbReference>
<dbReference type="RefSeq" id="NP_198609.1">
    <property type="nucleotide sequence ID" value="NM_123152.4"/>
</dbReference>
<dbReference type="FunCoup" id="Q84K34">
    <property type="interactions" value="197"/>
</dbReference>
<dbReference type="STRING" id="3702.Q84K34"/>
<dbReference type="PaxDb" id="3702-AT5G37930.1"/>
<dbReference type="ProteomicsDB" id="234559"/>
<dbReference type="EnsemblPlants" id="AT5G37930.1">
    <property type="protein sequence ID" value="AT5G37930.1"/>
    <property type="gene ID" value="AT5G37930"/>
</dbReference>
<dbReference type="GeneID" id="833772"/>
<dbReference type="Gramene" id="AT5G37930.1">
    <property type="protein sequence ID" value="AT5G37930.1"/>
    <property type="gene ID" value="AT5G37930"/>
</dbReference>
<dbReference type="KEGG" id="ath:AT5G37930"/>
<dbReference type="Araport" id="AT5G37930"/>
<dbReference type="TAIR" id="AT5G37930"/>
<dbReference type="eggNOG" id="KOG3002">
    <property type="taxonomic scope" value="Eukaryota"/>
</dbReference>
<dbReference type="HOGENOM" id="CLU_040603_2_0_1"/>
<dbReference type="InParanoid" id="Q84K34"/>
<dbReference type="OMA" id="MEIRIES"/>
<dbReference type="PhylomeDB" id="Q84K34"/>
<dbReference type="UniPathway" id="UPA00143"/>
<dbReference type="PRO" id="PR:Q84K34"/>
<dbReference type="Proteomes" id="UP000006548">
    <property type="component" value="Chromosome 5"/>
</dbReference>
<dbReference type="ExpressionAtlas" id="Q84K34">
    <property type="expression patterns" value="baseline and differential"/>
</dbReference>
<dbReference type="GO" id="GO:0016740">
    <property type="term" value="F:transferase activity"/>
    <property type="evidence" value="ECO:0007669"/>
    <property type="project" value="UniProtKB-KW"/>
</dbReference>
<dbReference type="GO" id="GO:0008270">
    <property type="term" value="F:zinc ion binding"/>
    <property type="evidence" value="ECO:0007669"/>
    <property type="project" value="UniProtKB-KW"/>
</dbReference>
<dbReference type="GO" id="GO:0016567">
    <property type="term" value="P:protein ubiquitination"/>
    <property type="evidence" value="ECO:0007669"/>
    <property type="project" value="UniProtKB-UniPathway"/>
</dbReference>
<dbReference type="CDD" id="cd16571">
    <property type="entry name" value="RING-HC_SIAHs"/>
    <property type="match status" value="1"/>
</dbReference>
<dbReference type="Gene3D" id="3.30.40.10">
    <property type="entry name" value="Zinc/RING finger domain, C3HC4 (zinc finger)"/>
    <property type="match status" value="1"/>
</dbReference>
<dbReference type="InterPro" id="IPR049548">
    <property type="entry name" value="Sina-like_RING"/>
</dbReference>
<dbReference type="InterPro" id="IPR044286">
    <property type="entry name" value="SINL_plant"/>
</dbReference>
<dbReference type="InterPro" id="IPR013083">
    <property type="entry name" value="Znf_RING/FYVE/PHD"/>
</dbReference>
<dbReference type="InterPro" id="IPR013010">
    <property type="entry name" value="Znf_SIAH"/>
</dbReference>
<dbReference type="PANTHER" id="PTHR46632:SF16">
    <property type="entry name" value="E3 UBIQUITIN-PROTEIN LIGASE SINA-LIKE 10"/>
    <property type="match status" value="1"/>
</dbReference>
<dbReference type="PANTHER" id="PTHR46632">
    <property type="entry name" value="E3 UBIQUITIN-PROTEIN LIGASE SINA-LIKE 4"/>
    <property type="match status" value="1"/>
</dbReference>
<dbReference type="Pfam" id="PF21362">
    <property type="entry name" value="Sina_RING"/>
    <property type="match status" value="1"/>
</dbReference>
<dbReference type="Pfam" id="PF21361">
    <property type="entry name" value="Sina_ZnF"/>
    <property type="match status" value="1"/>
</dbReference>
<dbReference type="SUPFAM" id="SSF49599">
    <property type="entry name" value="TRAF domain-like"/>
    <property type="match status" value="1"/>
</dbReference>
<dbReference type="PROSITE" id="PS51081">
    <property type="entry name" value="ZF_SIAH"/>
    <property type="match status" value="1"/>
</dbReference>
<feature type="chain" id="PRO_0000299199" description="E3 ubiquitin-protein ligase SINA-like 10">
    <location>
        <begin position="1"/>
        <end position="349"/>
    </location>
</feature>
<feature type="zinc finger region" description="RING-type; degenerate">
    <location>
        <begin position="113"/>
        <end position="149"/>
    </location>
</feature>
<feature type="zinc finger region" description="SIAH-type" evidence="2">
    <location>
        <begin position="166"/>
        <end position="224"/>
    </location>
</feature>
<feature type="region of interest" description="Disordered" evidence="3">
    <location>
        <begin position="1"/>
        <end position="77"/>
    </location>
</feature>
<feature type="region of interest" description="SBD" evidence="1">
    <location>
        <begin position="163"/>
        <end position="344"/>
    </location>
</feature>
<feature type="binding site" evidence="1">
    <location>
        <position position="171"/>
    </location>
    <ligand>
        <name>Zn(2+)</name>
        <dbReference type="ChEBI" id="CHEBI:29105"/>
        <label>1</label>
    </ligand>
</feature>
<feature type="binding site" evidence="1">
    <location>
        <position position="178"/>
    </location>
    <ligand>
        <name>Zn(2+)</name>
        <dbReference type="ChEBI" id="CHEBI:29105"/>
        <label>1</label>
    </ligand>
</feature>
<feature type="binding site" evidence="1">
    <location>
        <position position="190"/>
    </location>
    <ligand>
        <name>Zn(2+)</name>
        <dbReference type="ChEBI" id="CHEBI:29105"/>
        <label>1</label>
    </ligand>
</feature>
<feature type="binding site" evidence="1">
    <location>
        <position position="194"/>
    </location>
    <ligand>
        <name>Zn(2+)</name>
        <dbReference type="ChEBI" id="CHEBI:29105"/>
        <label>1</label>
    </ligand>
</feature>
<feature type="binding site" evidence="1">
    <location>
        <position position="201"/>
    </location>
    <ligand>
        <name>Zn(2+)</name>
        <dbReference type="ChEBI" id="CHEBI:29105"/>
        <label>2</label>
    </ligand>
</feature>
<feature type="binding site" evidence="1">
    <location>
        <position position="206"/>
    </location>
    <ligand>
        <name>Zn(2+)</name>
        <dbReference type="ChEBI" id="CHEBI:29105"/>
        <label>2</label>
    </ligand>
</feature>
<feature type="binding site" evidence="1">
    <location>
        <position position="218"/>
    </location>
    <ligand>
        <name>Zn(2+)</name>
        <dbReference type="ChEBI" id="CHEBI:29105"/>
        <label>2</label>
    </ligand>
</feature>
<feature type="binding site" evidence="1">
    <location>
        <position position="223"/>
    </location>
    <ligand>
        <name>Zn(2+)</name>
        <dbReference type="ChEBI" id="CHEBI:29105"/>
        <label>2</label>
    </ligand>
</feature>
<accession>Q84K34</accession>
<accession>Q9FKD3</accession>
<comment type="function">
    <text evidence="1">E3 ubiquitin-protein ligase that mediates ubiquitination and subsequent proteasomal degradation of target proteins. E3 ubiquitin ligases accept ubiquitin from an E2 ubiquitin-conjugating enzyme in the form of a thioester and then directly transfers the ubiquitin to targeted substrates. It probably triggers the ubiquitin-mediated degradation of different substrates.</text>
</comment>
<comment type="catalytic activity">
    <reaction>
        <text>S-ubiquitinyl-[E2 ubiquitin-conjugating enzyme]-L-cysteine + [acceptor protein]-L-lysine = [E2 ubiquitin-conjugating enzyme]-L-cysteine + N(6)-ubiquitinyl-[acceptor protein]-L-lysine.</text>
        <dbReference type="EC" id="2.3.2.27"/>
    </reaction>
</comment>
<comment type="pathway">
    <text>Protein modification; protein ubiquitination.</text>
</comment>
<comment type="domain">
    <text evidence="1">The RING-type zinc finger domain is essential for ubiquitin ligase activity.</text>
</comment>
<comment type="domain">
    <text evidence="1">The SBD domain (substrate-binding domain) mediates the homodimerization and the interaction with substrate proteins. It is related to the TRAF family.</text>
</comment>
<comment type="similarity">
    <text evidence="4">Belongs to the SINA (Seven in absentia) family.</text>
</comment>
<comment type="sequence caution" evidence="4">
    <conflict type="erroneous initiation">
        <sequence resource="EMBL-CDS" id="BAB09039"/>
    </conflict>
</comment>
<name>SIL10_ARATH</name>
<sequence>MARFSVCGGDDGEGPSNNNHQSRKRQRLPSIDENEEDAETSDAGSSGEEDEDETQNQGMRPESEDRGSTSDDSDREVVIEERRFGKFVNSQSSSSSKDSPLSVTLLDPDVLDCPICCEPLKIPIFQCDNGHLACTLCCTKVRNRCPSCTLPIGYVRCRAMEKVIEASRVSCLNAKYGCKESTSYGNRFSHEQVCVFTPCSCPILDCHYTGYYKDLNNHVRAEHKDDLISFVWNTRLTISLDLNKKTTILQEENDGHVIVVQVFRALHAVYVSVSCIAPLTPGVGRLSCRLAKITVDSLLKQGFMVKNIQKVTNEHPEDGFMLIPSYLFSGNDNLNLQIWIGHGRIFVHS</sequence>
<keyword id="KW-0479">Metal-binding</keyword>
<keyword id="KW-1185">Reference proteome</keyword>
<keyword id="KW-0808">Transferase</keyword>
<keyword id="KW-0833">Ubl conjugation pathway</keyword>
<keyword id="KW-0862">Zinc</keyword>
<keyword id="KW-0863">Zinc-finger</keyword>
<reference key="1">
    <citation type="journal article" date="1998" name="DNA Res.">
        <title>Structural analysis of Arabidopsis thaliana chromosome 5. VI. Sequence features of the regions of 1,367,185 bp covered by 19 physically assigned P1 and TAC clones.</title>
        <authorList>
            <person name="Kotani H."/>
            <person name="Nakamura Y."/>
            <person name="Sato S."/>
            <person name="Asamizu E."/>
            <person name="Kaneko T."/>
            <person name="Miyajima N."/>
            <person name="Tabata S."/>
        </authorList>
    </citation>
    <scope>NUCLEOTIDE SEQUENCE [LARGE SCALE GENOMIC DNA]</scope>
    <source>
        <strain>cv. Columbia</strain>
    </source>
</reference>
<reference key="2">
    <citation type="journal article" date="2017" name="Plant J.">
        <title>Araport11: a complete reannotation of the Arabidopsis thaliana reference genome.</title>
        <authorList>
            <person name="Cheng C.Y."/>
            <person name="Krishnakumar V."/>
            <person name="Chan A.P."/>
            <person name="Thibaud-Nissen F."/>
            <person name="Schobel S."/>
            <person name="Town C.D."/>
        </authorList>
    </citation>
    <scope>GENOME REANNOTATION</scope>
    <source>
        <strain>cv. Columbia</strain>
    </source>
</reference>
<reference key="3">
    <citation type="journal article" date="2003" name="Science">
        <title>Empirical analysis of transcriptional activity in the Arabidopsis genome.</title>
        <authorList>
            <person name="Yamada K."/>
            <person name="Lim J."/>
            <person name="Dale J.M."/>
            <person name="Chen H."/>
            <person name="Shinn P."/>
            <person name="Palm C.J."/>
            <person name="Southwick A.M."/>
            <person name="Wu H.C."/>
            <person name="Kim C.J."/>
            <person name="Nguyen M."/>
            <person name="Pham P.K."/>
            <person name="Cheuk R.F."/>
            <person name="Karlin-Newmann G."/>
            <person name="Liu S.X."/>
            <person name="Lam B."/>
            <person name="Sakano H."/>
            <person name="Wu T."/>
            <person name="Yu G."/>
            <person name="Miranda M."/>
            <person name="Quach H.L."/>
            <person name="Tripp M."/>
            <person name="Chang C.H."/>
            <person name="Lee J.M."/>
            <person name="Toriumi M.J."/>
            <person name="Chan M.M."/>
            <person name="Tang C.C."/>
            <person name="Onodera C.S."/>
            <person name="Deng J.M."/>
            <person name="Akiyama K."/>
            <person name="Ansari Y."/>
            <person name="Arakawa T."/>
            <person name="Banh J."/>
            <person name="Banno F."/>
            <person name="Bowser L."/>
            <person name="Brooks S.Y."/>
            <person name="Carninci P."/>
            <person name="Chao Q."/>
            <person name="Choy N."/>
            <person name="Enju A."/>
            <person name="Goldsmith A.D."/>
            <person name="Gurjal M."/>
            <person name="Hansen N.F."/>
            <person name="Hayashizaki Y."/>
            <person name="Johnson-Hopson C."/>
            <person name="Hsuan V.W."/>
            <person name="Iida K."/>
            <person name="Karnes M."/>
            <person name="Khan S."/>
            <person name="Koesema E."/>
            <person name="Ishida J."/>
            <person name="Jiang P.X."/>
            <person name="Jones T."/>
            <person name="Kawai J."/>
            <person name="Kamiya A."/>
            <person name="Meyers C."/>
            <person name="Nakajima M."/>
            <person name="Narusaka M."/>
            <person name="Seki M."/>
            <person name="Sakurai T."/>
            <person name="Satou M."/>
            <person name="Tamse R."/>
            <person name="Vaysberg M."/>
            <person name="Wallender E.K."/>
            <person name="Wong C."/>
            <person name="Yamamura Y."/>
            <person name="Yuan S."/>
            <person name="Shinozaki K."/>
            <person name="Davis R.W."/>
            <person name="Theologis A."/>
            <person name="Ecker J.R."/>
        </authorList>
    </citation>
    <scope>NUCLEOTIDE SEQUENCE [LARGE SCALE MRNA]</scope>
    <source>
        <strain>cv. Columbia</strain>
    </source>
</reference>
<proteinExistence type="evidence at transcript level"/>